<sequence>MAESVNENNNNAGDSNGSGRTKRNTIVTIVVVVIVVTLIIILATKKGWIGGSGKKVGAEEPATKLSSKSDDRNGGPNKKSPAKGSSKDDNNTEESVQSNLYG</sequence>
<evidence type="ECO:0000255" key="1"/>
<evidence type="ECO:0000256" key="2">
    <source>
        <dbReference type="SAM" id="MobiDB-lite"/>
    </source>
</evidence>
<evidence type="ECO:0000269" key="3">
    <source>
    </source>
</evidence>
<evidence type="ECO:0000305" key="4"/>
<accession>Q8SUL4</accession>
<keyword id="KW-0325">Glycoprotein</keyword>
<keyword id="KW-0472">Membrane</keyword>
<keyword id="KW-1185">Reference proteome</keyword>
<keyword id="KW-0812">Transmembrane</keyword>
<keyword id="KW-1133">Transmembrane helix</keyword>
<dbReference type="EMBL" id="AL590448">
    <property type="protein sequence ID" value="CAD26459.1"/>
    <property type="molecule type" value="Genomic_DNA"/>
</dbReference>
<dbReference type="RefSeq" id="NP_597283.1">
    <property type="nucleotide sequence ID" value="NM_001041892.1"/>
</dbReference>
<dbReference type="SMR" id="Q8SUL4"/>
<dbReference type="GeneID" id="859705"/>
<dbReference type="KEGG" id="ecu:ECU08_1550"/>
<dbReference type="VEuPathDB" id="MicrosporidiaDB:ECU08_1550"/>
<dbReference type="HOGENOM" id="CLU_2277459_0_0_1"/>
<dbReference type="InParanoid" id="Q8SUL4"/>
<dbReference type="Proteomes" id="UP000000819">
    <property type="component" value="Chromosome VIII"/>
</dbReference>
<dbReference type="GO" id="GO:0016020">
    <property type="term" value="C:membrane"/>
    <property type="evidence" value="ECO:0007669"/>
    <property type="project" value="UniProtKB-SubCell"/>
</dbReference>
<gene>
    <name type="ordered locus">ECU08_1550</name>
</gene>
<comment type="subcellular location">
    <subcellularLocation>
        <location evidence="4">Membrane</location>
        <topology evidence="4">Single-pass membrane protein</topology>
    </subcellularLocation>
</comment>
<comment type="developmental stage">
    <text evidence="3">Expressed in late sporogonial stages.</text>
</comment>
<protein>
    <recommendedName>
        <fullName>Uncharacterized membrane protein ECU08_1550</fullName>
    </recommendedName>
</protein>
<proteinExistence type="evidence at protein level"/>
<reference key="1">
    <citation type="journal article" date="2001" name="Nature">
        <title>Genome sequence and gene compaction of the eukaryote parasite Encephalitozoon cuniculi.</title>
        <authorList>
            <person name="Katinka M.D."/>
            <person name="Duprat S."/>
            <person name="Cornillot E."/>
            <person name="Metenier G."/>
            <person name="Thomarat F."/>
            <person name="Prensier G."/>
            <person name="Barbe V."/>
            <person name="Peyretaillade E."/>
            <person name="Brottier P."/>
            <person name="Wincker P."/>
            <person name="Delbac F."/>
            <person name="El Alaoui H."/>
            <person name="Peyret P."/>
            <person name="Saurin W."/>
            <person name="Gouy M."/>
            <person name="Weissenbach J."/>
            <person name="Vivares C.P."/>
        </authorList>
    </citation>
    <scope>NUCLEOTIDE SEQUENCE [LARGE SCALE GENOMIC DNA]</scope>
    <source>
        <strain>GB-M1</strain>
    </source>
</reference>
<reference key="2">
    <citation type="journal article" date="2006" name="Proteomics">
        <title>Proteomic analysis of the eukaryotic parasite Encephalitozoon cuniculi (microsporidia): a reference map for proteins expressed in late sporogonial stages.</title>
        <authorList>
            <person name="Brosson D."/>
            <person name="Kuhn L."/>
            <person name="Delbac F."/>
            <person name="Garin J."/>
            <person name="Vivares C.P."/>
            <person name="Texier C."/>
        </authorList>
    </citation>
    <scope>IDENTIFICATION BY MASS SPECTROMETRY [LARGE SCALE ANALYSIS]</scope>
    <scope>DEVELOPMENTAL STAGE</scope>
</reference>
<organism>
    <name type="scientific">Encephalitozoon cuniculi (strain GB-M1)</name>
    <name type="common">Microsporidian parasite</name>
    <dbReference type="NCBI Taxonomy" id="284813"/>
    <lineage>
        <taxon>Eukaryota</taxon>
        <taxon>Fungi</taxon>
        <taxon>Fungi incertae sedis</taxon>
        <taxon>Microsporidia</taxon>
        <taxon>Unikaryonidae</taxon>
        <taxon>Encephalitozoon</taxon>
    </lineage>
</organism>
<feature type="chain" id="PRO_0000382780" description="Uncharacterized membrane protein ECU08_1550">
    <location>
        <begin position="1"/>
        <end position="102"/>
    </location>
</feature>
<feature type="transmembrane region" description="Helical" evidence="1">
    <location>
        <begin position="24"/>
        <end position="44"/>
    </location>
</feature>
<feature type="region of interest" description="Disordered" evidence="2">
    <location>
        <begin position="1"/>
        <end position="21"/>
    </location>
</feature>
<feature type="region of interest" description="Disordered" evidence="2">
    <location>
        <begin position="49"/>
        <end position="102"/>
    </location>
</feature>
<feature type="compositionally biased region" description="Basic and acidic residues" evidence="2">
    <location>
        <begin position="56"/>
        <end position="73"/>
    </location>
</feature>
<feature type="compositionally biased region" description="Polar residues" evidence="2">
    <location>
        <begin position="93"/>
        <end position="102"/>
    </location>
</feature>
<feature type="glycosylation site" description="N-linked (GlcNAc...) asparagine" evidence="1">
    <location>
        <position position="16"/>
    </location>
</feature>
<feature type="glycosylation site" description="N-linked (GlcNAc...) asparagine" evidence="1">
    <location>
        <position position="90"/>
    </location>
</feature>
<name>Y8F5_ENCCU</name>